<reference key="1">
    <citation type="submission" date="2006-02" db="EMBL/GenBank/DDBJ databases">
        <title>Complete sequence of chromosome of Rhodoferax ferrireducens DSM 15236.</title>
        <authorList>
            <person name="Copeland A."/>
            <person name="Lucas S."/>
            <person name="Lapidus A."/>
            <person name="Barry K."/>
            <person name="Detter J.C."/>
            <person name="Glavina del Rio T."/>
            <person name="Hammon N."/>
            <person name="Israni S."/>
            <person name="Pitluck S."/>
            <person name="Brettin T."/>
            <person name="Bruce D."/>
            <person name="Han C."/>
            <person name="Tapia R."/>
            <person name="Gilna P."/>
            <person name="Kiss H."/>
            <person name="Schmutz J."/>
            <person name="Larimer F."/>
            <person name="Land M."/>
            <person name="Kyrpides N."/>
            <person name="Ivanova N."/>
            <person name="Richardson P."/>
        </authorList>
    </citation>
    <scope>NUCLEOTIDE SEQUENCE [LARGE SCALE GENOMIC DNA]</scope>
    <source>
        <strain>ATCC BAA-621 / DSM 15236 / T118</strain>
    </source>
</reference>
<accession>Q21RV6</accession>
<proteinExistence type="inferred from homology"/>
<keyword id="KW-0963">Cytoplasm</keyword>
<keyword id="KW-0251">Elongation factor</keyword>
<keyword id="KW-0342">GTP-binding</keyword>
<keyword id="KW-0378">Hydrolase</keyword>
<keyword id="KW-0460">Magnesium</keyword>
<keyword id="KW-0479">Metal-binding</keyword>
<keyword id="KW-0547">Nucleotide-binding</keyword>
<keyword id="KW-0648">Protein biosynthesis</keyword>
<keyword id="KW-1185">Reference proteome</keyword>
<organism>
    <name type="scientific">Albidiferax ferrireducens (strain ATCC BAA-621 / DSM 15236 / T118)</name>
    <name type="common">Rhodoferax ferrireducens</name>
    <dbReference type="NCBI Taxonomy" id="338969"/>
    <lineage>
        <taxon>Bacteria</taxon>
        <taxon>Pseudomonadati</taxon>
        <taxon>Pseudomonadota</taxon>
        <taxon>Betaproteobacteria</taxon>
        <taxon>Burkholderiales</taxon>
        <taxon>Comamonadaceae</taxon>
        <taxon>Rhodoferax</taxon>
    </lineage>
</organism>
<dbReference type="EC" id="3.6.5.3" evidence="2"/>
<dbReference type="EMBL" id="CP000267">
    <property type="protein sequence ID" value="ABD71497.1"/>
    <property type="molecule type" value="Genomic_DNA"/>
</dbReference>
<dbReference type="RefSeq" id="WP_011466060.1">
    <property type="nucleotide sequence ID" value="NC_007908.1"/>
</dbReference>
<dbReference type="SMR" id="Q21RV6"/>
<dbReference type="STRING" id="338969.Rfer_3797"/>
<dbReference type="KEGG" id="rfr:Rfer_3797"/>
<dbReference type="eggNOG" id="COG0050">
    <property type="taxonomic scope" value="Bacteria"/>
</dbReference>
<dbReference type="HOGENOM" id="CLU_007265_0_2_4"/>
<dbReference type="OrthoDB" id="9803139at2"/>
<dbReference type="Proteomes" id="UP000008332">
    <property type="component" value="Chromosome"/>
</dbReference>
<dbReference type="GO" id="GO:0005829">
    <property type="term" value="C:cytosol"/>
    <property type="evidence" value="ECO:0007669"/>
    <property type="project" value="TreeGrafter"/>
</dbReference>
<dbReference type="GO" id="GO:0005525">
    <property type="term" value="F:GTP binding"/>
    <property type="evidence" value="ECO:0007669"/>
    <property type="project" value="UniProtKB-UniRule"/>
</dbReference>
<dbReference type="GO" id="GO:0003924">
    <property type="term" value="F:GTPase activity"/>
    <property type="evidence" value="ECO:0007669"/>
    <property type="project" value="InterPro"/>
</dbReference>
<dbReference type="GO" id="GO:0097216">
    <property type="term" value="F:guanosine tetraphosphate binding"/>
    <property type="evidence" value="ECO:0007669"/>
    <property type="project" value="UniProtKB-ARBA"/>
</dbReference>
<dbReference type="GO" id="GO:0003746">
    <property type="term" value="F:translation elongation factor activity"/>
    <property type="evidence" value="ECO:0007669"/>
    <property type="project" value="UniProtKB-UniRule"/>
</dbReference>
<dbReference type="CDD" id="cd01884">
    <property type="entry name" value="EF_Tu"/>
    <property type="match status" value="1"/>
</dbReference>
<dbReference type="CDD" id="cd03697">
    <property type="entry name" value="EFTU_II"/>
    <property type="match status" value="1"/>
</dbReference>
<dbReference type="CDD" id="cd03707">
    <property type="entry name" value="EFTU_III"/>
    <property type="match status" value="1"/>
</dbReference>
<dbReference type="FunFam" id="2.40.30.10:FF:000001">
    <property type="entry name" value="Elongation factor Tu"/>
    <property type="match status" value="1"/>
</dbReference>
<dbReference type="FunFam" id="3.40.50.300:FF:000003">
    <property type="entry name" value="Elongation factor Tu"/>
    <property type="match status" value="1"/>
</dbReference>
<dbReference type="Gene3D" id="3.40.50.300">
    <property type="entry name" value="P-loop containing nucleotide triphosphate hydrolases"/>
    <property type="match status" value="1"/>
</dbReference>
<dbReference type="Gene3D" id="2.40.30.10">
    <property type="entry name" value="Translation factors"/>
    <property type="match status" value="2"/>
</dbReference>
<dbReference type="HAMAP" id="MF_00118_B">
    <property type="entry name" value="EF_Tu_B"/>
    <property type="match status" value="1"/>
</dbReference>
<dbReference type="InterPro" id="IPR041709">
    <property type="entry name" value="EF-Tu_GTP-bd"/>
</dbReference>
<dbReference type="InterPro" id="IPR050055">
    <property type="entry name" value="EF-Tu_GTPase"/>
</dbReference>
<dbReference type="InterPro" id="IPR004161">
    <property type="entry name" value="EFTu-like_2"/>
</dbReference>
<dbReference type="InterPro" id="IPR033720">
    <property type="entry name" value="EFTU_2"/>
</dbReference>
<dbReference type="InterPro" id="IPR031157">
    <property type="entry name" value="G_TR_CS"/>
</dbReference>
<dbReference type="InterPro" id="IPR027417">
    <property type="entry name" value="P-loop_NTPase"/>
</dbReference>
<dbReference type="InterPro" id="IPR005225">
    <property type="entry name" value="Small_GTP-bd"/>
</dbReference>
<dbReference type="InterPro" id="IPR000795">
    <property type="entry name" value="T_Tr_GTP-bd_dom"/>
</dbReference>
<dbReference type="InterPro" id="IPR009000">
    <property type="entry name" value="Transl_B-barrel_sf"/>
</dbReference>
<dbReference type="InterPro" id="IPR009001">
    <property type="entry name" value="Transl_elong_EF1A/Init_IF2_C"/>
</dbReference>
<dbReference type="InterPro" id="IPR004541">
    <property type="entry name" value="Transl_elong_EFTu/EF1A_bac/org"/>
</dbReference>
<dbReference type="InterPro" id="IPR004160">
    <property type="entry name" value="Transl_elong_EFTu/EF1A_C"/>
</dbReference>
<dbReference type="NCBIfam" id="TIGR00485">
    <property type="entry name" value="EF-Tu"/>
    <property type="match status" value="1"/>
</dbReference>
<dbReference type="NCBIfam" id="NF000766">
    <property type="entry name" value="PRK00049.1"/>
    <property type="match status" value="1"/>
</dbReference>
<dbReference type="NCBIfam" id="NF009372">
    <property type="entry name" value="PRK12735.1"/>
    <property type="match status" value="1"/>
</dbReference>
<dbReference type="NCBIfam" id="NF009373">
    <property type="entry name" value="PRK12736.1"/>
    <property type="match status" value="1"/>
</dbReference>
<dbReference type="NCBIfam" id="TIGR00231">
    <property type="entry name" value="small_GTP"/>
    <property type="match status" value="1"/>
</dbReference>
<dbReference type="PANTHER" id="PTHR43721:SF22">
    <property type="entry name" value="ELONGATION FACTOR TU, MITOCHONDRIAL"/>
    <property type="match status" value="1"/>
</dbReference>
<dbReference type="PANTHER" id="PTHR43721">
    <property type="entry name" value="ELONGATION FACTOR TU-RELATED"/>
    <property type="match status" value="1"/>
</dbReference>
<dbReference type="Pfam" id="PF00009">
    <property type="entry name" value="GTP_EFTU"/>
    <property type="match status" value="1"/>
</dbReference>
<dbReference type="Pfam" id="PF03144">
    <property type="entry name" value="GTP_EFTU_D2"/>
    <property type="match status" value="1"/>
</dbReference>
<dbReference type="Pfam" id="PF03143">
    <property type="entry name" value="GTP_EFTU_D3"/>
    <property type="match status" value="1"/>
</dbReference>
<dbReference type="PRINTS" id="PR00315">
    <property type="entry name" value="ELONGATNFCT"/>
</dbReference>
<dbReference type="SUPFAM" id="SSF50465">
    <property type="entry name" value="EF-Tu/eEF-1alpha/eIF2-gamma C-terminal domain"/>
    <property type="match status" value="1"/>
</dbReference>
<dbReference type="SUPFAM" id="SSF52540">
    <property type="entry name" value="P-loop containing nucleoside triphosphate hydrolases"/>
    <property type="match status" value="1"/>
</dbReference>
<dbReference type="SUPFAM" id="SSF50447">
    <property type="entry name" value="Translation proteins"/>
    <property type="match status" value="1"/>
</dbReference>
<dbReference type="PROSITE" id="PS00301">
    <property type="entry name" value="G_TR_1"/>
    <property type="match status" value="1"/>
</dbReference>
<dbReference type="PROSITE" id="PS51722">
    <property type="entry name" value="G_TR_2"/>
    <property type="match status" value="1"/>
</dbReference>
<name>EFTU2_ALBFT</name>
<comment type="function">
    <text evidence="2">GTP hydrolase that promotes the GTP-dependent binding of aminoacyl-tRNA to the A-site of ribosomes during protein biosynthesis.</text>
</comment>
<comment type="catalytic activity">
    <reaction evidence="2">
        <text>GTP + H2O = GDP + phosphate + H(+)</text>
        <dbReference type="Rhea" id="RHEA:19669"/>
        <dbReference type="ChEBI" id="CHEBI:15377"/>
        <dbReference type="ChEBI" id="CHEBI:15378"/>
        <dbReference type="ChEBI" id="CHEBI:37565"/>
        <dbReference type="ChEBI" id="CHEBI:43474"/>
        <dbReference type="ChEBI" id="CHEBI:58189"/>
        <dbReference type="EC" id="3.6.5.3"/>
    </reaction>
    <physiologicalReaction direction="left-to-right" evidence="2">
        <dbReference type="Rhea" id="RHEA:19670"/>
    </physiologicalReaction>
</comment>
<comment type="subunit">
    <text evidence="2">Monomer.</text>
</comment>
<comment type="subcellular location">
    <subcellularLocation>
        <location evidence="2">Cytoplasm</location>
    </subcellularLocation>
</comment>
<comment type="similarity">
    <text evidence="2">Belongs to the TRAFAC class translation factor GTPase superfamily. Classic translation factor GTPase family. EF-Tu/EF-1A subfamily.</text>
</comment>
<gene>
    <name evidence="2" type="primary">tuf2</name>
    <name type="ordered locus">Rfer_3797</name>
</gene>
<feature type="chain" id="PRO_0000337493" description="Elongation factor Tu 2">
    <location>
        <begin position="1"/>
        <end position="396"/>
    </location>
</feature>
<feature type="domain" description="tr-type G">
    <location>
        <begin position="10"/>
        <end position="206"/>
    </location>
</feature>
<feature type="region of interest" description="G1" evidence="1">
    <location>
        <begin position="19"/>
        <end position="26"/>
    </location>
</feature>
<feature type="region of interest" description="G2" evidence="1">
    <location>
        <begin position="60"/>
        <end position="64"/>
    </location>
</feature>
<feature type="region of interest" description="G3" evidence="1">
    <location>
        <begin position="81"/>
        <end position="84"/>
    </location>
</feature>
<feature type="region of interest" description="G4" evidence="1">
    <location>
        <begin position="136"/>
        <end position="139"/>
    </location>
</feature>
<feature type="region of interest" description="G5" evidence="1">
    <location>
        <begin position="174"/>
        <end position="176"/>
    </location>
</feature>
<feature type="binding site" evidence="2">
    <location>
        <begin position="19"/>
        <end position="26"/>
    </location>
    <ligand>
        <name>GTP</name>
        <dbReference type="ChEBI" id="CHEBI:37565"/>
    </ligand>
</feature>
<feature type="binding site" evidence="2">
    <location>
        <position position="26"/>
    </location>
    <ligand>
        <name>Mg(2+)</name>
        <dbReference type="ChEBI" id="CHEBI:18420"/>
    </ligand>
</feature>
<feature type="binding site" evidence="2">
    <location>
        <begin position="81"/>
        <end position="85"/>
    </location>
    <ligand>
        <name>GTP</name>
        <dbReference type="ChEBI" id="CHEBI:37565"/>
    </ligand>
</feature>
<feature type="binding site" evidence="2">
    <location>
        <begin position="136"/>
        <end position="139"/>
    </location>
    <ligand>
        <name>GTP</name>
        <dbReference type="ChEBI" id="CHEBI:37565"/>
    </ligand>
</feature>
<sequence length="396" mass="42977">MGKEKFSRSKPHVNVGTIGHVDHGKTTLTAAITSVLAAKFGGTAKAYDQIDAAPEEKARGITINTAHVEYETANRHYAHVDCPGHADYVKNMITGAAQMDGAILVVSAADGPMPQTREHILLARQVGVPYIIVFLNKCDMVDDAELLELVEMEVRELLDKYEFPGDTTPIIHGSAKLAMEGDKGPMGEQAIMKLADALDSYIPLPERAIDGAFLMPVEDVFSISGRGTVVTGRVERGIIKVGEEIEIVGIHDTQKTTCTGVEMFRKLLDQGQAGDNVGILLRGTKREDVQRGQVLCKPGSIKPHTHFTGEIYVLSKDEGGRHTPFFNNYRPQFYFRTTDVTGAIELPEGKEMVMPGDNVSIIVKLINPIAMEEGLRFAIREGGKTVGAGVVAKVIA</sequence>
<evidence type="ECO:0000250" key="1"/>
<evidence type="ECO:0000255" key="2">
    <source>
        <dbReference type="HAMAP-Rule" id="MF_00118"/>
    </source>
</evidence>
<protein>
    <recommendedName>
        <fullName evidence="2">Elongation factor Tu 2</fullName>
        <shortName evidence="2">EF-Tu 2</shortName>
        <ecNumber evidence="2">3.6.5.3</ecNumber>
    </recommendedName>
</protein>